<gene>
    <name evidence="1" type="primary">rpmE2</name>
    <name type="ordered locus">SPG_1193</name>
</gene>
<feature type="chain" id="PRO_1000126843" description="Large ribosomal subunit protein bL31B">
    <location>
        <begin position="1"/>
        <end position="80"/>
    </location>
</feature>
<dbReference type="EMBL" id="CP001015">
    <property type="protein sequence ID" value="ACF56565.1"/>
    <property type="molecule type" value="Genomic_DNA"/>
</dbReference>
<dbReference type="SMR" id="B5E535"/>
<dbReference type="KEGG" id="spx:SPG_1193"/>
<dbReference type="HOGENOM" id="CLU_114306_2_2_9"/>
<dbReference type="GO" id="GO:1990904">
    <property type="term" value="C:ribonucleoprotein complex"/>
    <property type="evidence" value="ECO:0007669"/>
    <property type="project" value="UniProtKB-KW"/>
</dbReference>
<dbReference type="GO" id="GO:0005840">
    <property type="term" value="C:ribosome"/>
    <property type="evidence" value="ECO:0007669"/>
    <property type="project" value="UniProtKB-KW"/>
</dbReference>
<dbReference type="GO" id="GO:0003735">
    <property type="term" value="F:structural constituent of ribosome"/>
    <property type="evidence" value="ECO:0007669"/>
    <property type="project" value="InterPro"/>
</dbReference>
<dbReference type="GO" id="GO:0006412">
    <property type="term" value="P:translation"/>
    <property type="evidence" value="ECO:0007669"/>
    <property type="project" value="UniProtKB-UniRule"/>
</dbReference>
<dbReference type="Gene3D" id="4.10.830.30">
    <property type="entry name" value="Ribosomal protein L31"/>
    <property type="match status" value="1"/>
</dbReference>
<dbReference type="HAMAP" id="MF_00502">
    <property type="entry name" value="Ribosomal_bL31_2"/>
    <property type="match status" value="1"/>
</dbReference>
<dbReference type="InterPro" id="IPR034704">
    <property type="entry name" value="Ribosomal_bL28/bL31-like_sf"/>
</dbReference>
<dbReference type="InterPro" id="IPR002150">
    <property type="entry name" value="Ribosomal_bL31"/>
</dbReference>
<dbReference type="InterPro" id="IPR027493">
    <property type="entry name" value="Ribosomal_bL31_B"/>
</dbReference>
<dbReference type="InterPro" id="IPR042105">
    <property type="entry name" value="Ribosomal_bL31_sf"/>
</dbReference>
<dbReference type="NCBIfam" id="TIGR00105">
    <property type="entry name" value="L31"/>
    <property type="match status" value="1"/>
</dbReference>
<dbReference type="NCBIfam" id="NF002462">
    <property type="entry name" value="PRK01678.1"/>
    <property type="match status" value="1"/>
</dbReference>
<dbReference type="PANTHER" id="PTHR33280">
    <property type="entry name" value="50S RIBOSOMAL PROTEIN L31, CHLOROPLASTIC"/>
    <property type="match status" value="1"/>
</dbReference>
<dbReference type="PANTHER" id="PTHR33280:SF1">
    <property type="entry name" value="LARGE RIBOSOMAL SUBUNIT PROTEIN BL31C"/>
    <property type="match status" value="1"/>
</dbReference>
<dbReference type="Pfam" id="PF01197">
    <property type="entry name" value="Ribosomal_L31"/>
    <property type="match status" value="1"/>
</dbReference>
<dbReference type="PRINTS" id="PR01249">
    <property type="entry name" value="RIBOSOMALL31"/>
</dbReference>
<dbReference type="SUPFAM" id="SSF143800">
    <property type="entry name" value="L28p-like"/>
    <property type="match status" value="1"/>
</dbReference>
<dbReference type="PROSITE" id="PS01143">
    <property type="entry name" value="RIBOSOMAL_L31"/>
    <property type="match status" value="1"/>
</dbReference>
<keyword id="KW-0687">Ribonucleoprotein</keyword>
<keyword id="KW-0689">Ribosomal protein</keyword>
<sequence>MKKDIHPEYRPVVFMDTTTGYQFLSGSTKRSNETVEFEGETYPLIRVEISSDSHPFYTGRQKFTQADGRVDRFNKKYGLK</sequence>
<name>RL31B_STRP4</name>
<organism>
    <name type="scientific">Streptococcus pneumoniae serotype 19F (strain G54)</name>
    <dbReference type="NCBI Taxonomy" id="512566"/>
    <lineage>
        <taxon>Bacteria</taxon>
        <taxon>Bacillati</taxon>
        <taxon>Bacillota</taxon>
        <taxon>Bacilli</taxon>
        <taxon>Lactobacillales</taxon>
        <taxon>Streptococcaceae</taxon>
        <taxon>Streptococcus</taxon>
    </lineage>
</organism>
<reference key="1">
    <citation type="journal article" date="2001" name="Microb. Drug Resist.">
        <title>Annotated draft genomic sequence from a Streptococcus pneumoniae type 19F clinical isolate.</title>
        <authorList>
            <person name="Dopazo J."/>
            <person name="Mendoza A."/>
            <person name="Herrero J."/>
            <person name="Caldara F."/>
            <person name="Humbert Y."/>
            <person name="Friedli L."/>
            <person name="Guerrier M."/>
            <person name="Grand-Schenk E."/>
            <person name="Gandin C."/>
            <person name="de Francesco M."/>
            <person name="Polissi A."/>
            <person name="Buell G."/>
            <person name="Feger G."/>
            <person name="Garcia E."/>
            <person name="Peitsch M."/>
            <person name="Garcia-Bustos J.F."/>
        </authorList>
    </citation>
    <scope>NUCLEOTIDE SEQUENCE [LARGE SCALE GENOMIC DNA]</scope>
    <source>
        <strain>G54</strain>
    </source>
</reference>
<reference key="2">
    <citation type="submission" date="2008-03" db="EMBL/GenBank/DDBJ databases">
        <title>Pneumococcal beta glucoside metabolism investigated by whole genome comparison.</title>
        <authorList>
            <person name="Mulas L."/>
            <person name="Trappetti C."/>
            <person name="Hakenbeck R."/>
            <person name="Iannelli F."/>
            <person name="Pozzi G."/>
            <person name="Davidsen T.M."/>
            <person name="Tettelin H."/>
            <person name="Oggioni M."/>
        </authorList>
    </citation>
    <scope>NUCLEOTIDE SEQUENCE [LARGE SCALE GENOMIC DNA]</scope>
    <source>
        <strain>G54</strain>
    </source>
</reference>
<evidence type="ECO:0000255" key="1">
    <source>
        <dbReference type="HAMAP-Rule" id="MF_00502"/>
    </source>
</evidence>
<evidence type="ECO:0000305" key="2"/>
<accession>B5E535</accession>
<proteinExistence type="inferred from homology"/>
<protein>
    <recommendedName>
        <fullName evidence="1">Large ribosomal subunit protein bL31B</fullName>
    </recommendedName>
    <alternativeName>
        <fullName evidence="2">50S ribosomal protein L31 type B</fullName>
    </alternativeName>
</protein>
<comment type="subunit">
    <text evidence="1">Part of the 50S ribosomal subunit.</text>
</comment>
<comment type="similarity">
    <text evidence="1">Belongs to the bacterial ribosomal protein bL31 family. Type B subfamily.</text>
</comment>